<sequence length="198" mass="20852">MAKILVLYYSMYGHIETMAHAVAEGAKKVDGAEVIIKRVPETMPPEIFAKAGGKTQNAPVATPQELADYDAIIFGTPTRFGNMSGQMRTFLDQTGGLWASGALYGKLGSVFSSTGTGGGQEQTITSTWTTLAHHGMVIVPIGYAAQELFDVSQVRGGTPYGATTIAGGDGSRQPSQEELSIARYQGEYVAGLAVKLNG</sequence>
<organism>
    <name type="scientific">Salmonella heidelberg (strain SL476)</name>
    <dbReference type="NCBI Taxonomy" id="454169"/>
    <lineage>
        <taxon>Bacteria</taxon>
        <taxon>Pseudomonadati</taxon>
        <taxon>Pseudomonadota</taxon>
        <taxon>Gammaproteobacteria</taxon>
        <taxon>Enterobacterales</taxon>
        <taxon>Enterobacteriaceae</taxon>
        <taxon>Salmonella</taxon>
    </lineage>
</organism>
<comment type="catalytic activity">
    <reaction evidence="1">
        <text>a quinone + NADH + H(+) = a quinol + NAD(+)</text>
        <dbReference type="Rhea" id="RHEA:46160"/>
        <dbReference type="ChEBI" id="CHEBI:15378"/>
        <dbReference type="ChEBI" id="CHEBI:24646"/>
        <dbReference type="ChEBI" id="CHEBI:57540"/>
        <dbReference type="ChEBI" id="CHEBI:57945"/>
        <dbReference type="ChEBI" id="CHEBI:132124"/>
        <dbReference type="EC" id="1.6.5.2"/>
    </reaction>
</comment>
<comment type="catalytic activity">
    <reaction evidence="1">
        <text>a quinone + NADPH + H(+) = a quinol + NADP(+)</text>
        <dbReference type="Rhea" id="RHEA:46164"/>
        <dbReference type="ChEBI" id="CHEBI:15378"/>
        <dbReference type="ChEBI" id="CHEBI:24646"/>
        <dbReference type="ChEBI" id="CHEBI:57783"/>
        <dbReference type="ChEBI" id="CHEBI:58349"/>
        <dbReference type="ChEBI" id="CHEBI:132124"/>
        <dbReference type="EC" id="1.6.5.2"/>
    </reaction>
</comment>
<comment type="cofactor">
    <cofactor evidence="1">
        <name>FMN</name>
        <dbReference type="ChEBI" id="CHEBI:58210"/>
    </cofactor>
    <text evidence="1">Binds 1 FMN per monomer.</text>
</comment>
<comment type="similarity">
    <text evidence="1">Belongs to the WrbA family.</text>
</comment>
<accession>B4TEP2</accession>
<proteinExistence type="inferred from homology"/>
<feature type="chain" id="PRO_1000200644" description="NAD(P)H dehydrogenase (quinone)">
    <location>
        <begin position="1"/>
        <end position="198"/>
    </location>
</feature>
<feature type="domain" description="Flavodoxin-like" evidence="1">
    <location>
        <begin position="4"/>
        <end position="189"/>
    </location>
</feature>
<feature type="binding site" evidence="1">
    <location>
        <begin position="10"/>
        <end position="15"/>
    </location>
    <ligand>
        <name>FMN</name>
        <dbReference type="ChEBI" id="CHEBI:58210"/>
    </ligand>
</feature>
<feature type="binding site" evidence="1">
    <location>
        <position position="12"/>
    </location>
    <ligand>
        <name>NAD(+)</name>
        <dbReference type="ChEBI" id="CHEBI:57540"/>
    </ligand>
</feature>
<feature type="binding site" evidence="1">
    <location>
        <begin position="78"/>
        <end position="80"/>
    </location>
    <ligand>
        <name>FMN</name>
        <dbReference type="ChEBI" id="CHEBI:58210"/>
    </ligand>
</feature>
<feature type="binding site" evidence="1">
    <location>
        <position position="98"/>
    </location>
    <ligand>
        <name>substrate</name>
    </ligand>
</feature>
<feature type="binding site" evidence="1">
    <location>
        <begin position="113"/>
        <end position="118"/>
    </location>
    <ligand>
        <name>FMN</name>
        <dbReference type="ChEBI" id="CHEBI:58210"/>
    </ligand>
</feature>
<feature type="binding site" evidence="1">
    <location>
        <position position="133"/>
    </location>
    <ligand>
        <name>FMN</name>
        <dbReference type="ChEBI" id="CHEBI:58210"/>
    </ligand>
</feature>
<keyword id="KW-0285">Flavoprotein</keyword>
<keyword id="KW-0288">FMN</keyword>
<keyword id="KW-0520">NAD</keyword>
<keyword id="KW-0521">NADP</keyword>
<keyword id="KW-0547">Nucleotide-binding</keyword>
<keyword id="KW-0560">Oxidoreductase</keyword>
<reference key="1">
    <citation type="journal article" date="2011" name="J. Bacteriol.">
        <title>Comparative genomics of 28 Salmonella enterica isolates: evidence for CRISPR-mediated adaptive sublineage evolution.</title>
        <authorList>
            <person name="Fricke W.F."/>
            <person name="Mammel M.K."/>
            <person name="McDermott P.F."/>
            <person name="Tartera C."/>
            <person name="White D.G."/>
            <person name="Leclerc J.E."/>
            <person name="Ravel J."/>
            <person name="Cebula T.A."/>
        </authorList>
    </citation>
    <scope>NUCLEOTIDE SEQUENCE [LARGE SCALE GENOMIC DNA]</scope>
    <source>
        <strain>SL476</strain>
    </source>
</reference>
<name>NQOR_SALHS</name>
<evidence type="ECO:0000255" key="1">
    <source>
        <dbReference type="HAMAP-Rule" id="MF_01017"/>
    </source>
</evidence>
<gene>
    <name type="ordered locus">SeHA_C1229</name>
</gene>
<protein>
    <recommendedName>
        <fullName evidence="1">NAD(P)H dehydrogenase (quinone)</fullName>
        <ecNumber evidence="1">1.6.5.2</ecNumber>
    </recommendedName>
    <alternativeName>
        <fullName>Flavoprotein WrbA</fullName>
    </alternativeName>
    <alternativeName>
        <fullName evidence="1">NAD(P)H:quinone oxidoreductase</fullName>
        <shortName evidence="1">NQO</shortName>
    </alternativeName>
</protein>
<dbReference type="EC" id="1.6.5.2" evidence="1"/>
<dbReference type="EMBL" id="CP001120">
    <property type="protein sequence ID" value="ACF66406.1"/>
    <property type="molecule type" value="Genomic_DNA"/>
</dbReference>
<dbReference type="SMR" id="B4TEP2"/>
<dbReference type="KEGG" id="seh:SeHA_C1229"/>
<dbReference type="HOGENOM" id="CLU_051402_0_2_6"/>
<dbReference type="Proteomes" id="UP000001866">
    <property type="component" value="Chromosome"/>
</dbReference>
<dbReference type="GO" id="GO:0016020">
    <property type="term" value="C:membrane"/>
    <property type="evidence" value="ECO:0007669"/>
    <property type="project" value="TreeGrafter"/>
</dbReference>
<dbReference type="GO" id="GO:0050660">
    <property type="term" value="F:flavin adenine dinucleotide binding"/>
    <property type="evidence" value="ECO:0007669"/>
    <property type="project" value="UniProtKB-UniRule"/>
</dbReference>
<dbReference type="GO" id="GO:0010181">
    <property type="term" value="F:FMN binding"/>
    <property type="evidence" value="ECO:0007669"/>
    <property type="project" value="InterPro"/>
</dbReference>
<dbReference type="GO" id="GO:0051287">
    <property type="term" value="F:NAD binding"/>
    <property type="evidence" value="ECO:0007669"/>
    <property type="project" value="UniProtKB-UniRule"/>
</dbReference>
<dbReference type="GO" id="GO:0050136">
    <property type="term" value="F:NADH:ubiquinone reductase (non-electrogenic) activity"/>
    <property type="evidence" value="ECO:0007669"/>
    <property type="project" value="RHEA"/>
</dbReference>
<dbReference type="GO" id="GO:0050661">
    <property type="term" value="F:NADP binding"/>
    <property type="evidence" value="ECO:0007669"/>
    <property type="project" value="UniProtKB-UniRule"/>
</dbReference>
<dbReference type="GO" id="GO:0008753">
    <property type="term" value="F:NADPH dehydrogenase (quinone) activity"/>
    <property type="evidence" value="ECO:0007669"/>
    <property type="project" value="RHEA"/>
</dbReference>
<dbReference type="FunFam" id="3.40.50.360:FF:000004">
    <property type="entry name" value="NAD(P)H dehydrogenase (quinone)"/>
    <property type="match status" value="1"/>
</dbReference>
<dbReference type="Gene3D" id="3.40.50.360">
    <property type="match status" value="1"/>
</dbReference>
<dbReference type="HAMAP" id="MF_01017">
    <property type="entry name" value="NQOR"/>
    <property type="match status" value="1"/>
</dbReference>
<dbReference type="InterPro" id="IPR008254">
    <property type="entry name" value="Flavodoxin/NO_synth"/>
</dbReference>
<dbReference type="InterPro" id="IPR029039">
    <property type="entry name" value="Flavoprotein-like_sf"/>
</dbReference>
<dbReference type="InterPro" id="IPR010089">
    <property type="entry name" value="Flavoprotein_WrbA-like"/>
</dbReference>
<dbReference type="InterPro" id="IPR005025">
    <property type="entry name" value="FMN_Rdtase-like_dom"/>
</dbReference>
<dbReference type="InterPro" id="IPR037513">
    <property type="entry name" value="NQO"/>
</dbReference>
<dbReference type="NCBIfam" id="TIGR01755">
    <property type="entry name" value="flav_wrbA"/>
    <property type="match status" value="1"/>
</dbReference>
<dbReference type="NCBIfam" id="NF002999">
    <property type="entry name" value="PRK03767.1"/>
    <property type="match status" value="1"/>
</dbReference>
<dbReference type="PANTHER" id="PTHR30546">
    <property type="entry name" value="FLAVODOXIN-RELATED PROTEIN WRBA-RELATED"/>
    <property type="match status" value="1"/>
</dbReference>
<dbReference type="PANTHER" id="PTHR30546:SF23">
    <property type="entry name" value="FLAVOPROTEIN-LIKE PROTEIN YCP4-RELATED"/>
    <property type="match status" value="1"/>
</dbReference>
<dbReference type="Pfam" id="PF03358">
    <property type="entry name" value="FMN_red"/>
    <property type="match status" value="1"/>
</dbReference>
<dbReference type="SUPFAM" id="SSF52218">
    <property type="entry name" value="Flavoproteins"/>
    <property type="match status" value="1"/>
</dbReference>
<dbReference type="PROSITE" id="PS50902">
    <property type="entry name" value="FLAVODOXIN_LIKE"/>
    <property type="match status" value="1"/>
</dbReference>